<dbReference type="EC" id="6.3.4.4" evidence="1"/>
<dbReference type="EMBL" id="CR954253">
    <property type="protein sequence ID" value="CAI97130.1"/>
    <property type="molecule type" value="Genomic_DNA"/>
</dbReference>
<dbReference type="RefSeq" id="WP_003622306.1">
    <property type="nucleotide sequence ID" value="NZ_JQAV01000010.1"/>
</dbReference>
<dbReference type="SMR" id="Q1GBV4"/>
<dbReference type="STRING" id="390333.Ldb0291"/>
<dbReference type="KEGG" id="ldb:Ldb0291"/>
<dbReference type="PATRIC" id="fig|390333.13.peg.493"/>
<dbReference type="eggNOG" id="COG0104">
    <property type="taxonomic scope" value="Bacteria"/>
</dbReference>
<dbReference type="HOGENOM" id="CLU_029848_0_0_9"/>
<dbReference type="BioCyc" id="LDEL390333:LDB_RS01190-MONOMER"/>
<dbReference type="UniPathway" id="UPA00075">
    <property type="reaction ID" value="UER00335"/>
</dbReference>
<dbReference type="Proteomes" id="UP000001259">
    <property type="component" value="Chromosome"/>
</dbReference>
<dbReference type="GO" id="GO:0005737">
    <property type="term" value="C:cytoplasm"/>
    <property type="evidence" value="ECO:0007669"/>
    <property type="project" value="UniProtKB-SubCell"/>
</dbReference>
<dbReference type="GO" id="GO:0004019">
    <property type="term" value="F:adenylosuccinate synthase activity"/>
    <property type="evidence" value="ECO:0007669"/>
    <property type="project" value="UniProtKB-UniRule"/>
</dbReference>
<dbReference type="GO" id="GO:0005525">
    <property type="term" value="F:GTP binding"/>
    <property type="evidence" value="ECO:0007669"/>
    <property type="project" value="UniProtKB-UniRule"/>
</dbReference>
<dbReference type="GO" id="GO:0000287">
    <property type="term" value="F:magnesium ion binding"/>
    <property type="evidence" value="ECO:0007669"/>
    <property type="project" value="UniProtKB-UniRule"/>
</dbReference>
<dbReference type="GO" id="GO:0044208">
    <property type="term" value="P:'de novo' AMP biosynthetic process"/>
    <property type="evidence" value="ECO:0007669"/>
    <property type="project" value="UniProtKB-UniRule"/>
</dbReference>
<dbReference type="GO" id="GO:0046040">
    <property type="term" value="P:IMP metabolic process"/>
    <property type="evidence" value="ECO:0007669"/>
    <property type="project" value="TreeGrafter"/>
</dbReference>
<dbReference type="CDD" id="cd03108">
    <property type="entry name" value="AdSS"/>
    <property type="match status" value="1"/>
</dbReference>
<dbReference type="FunFam" id="1.10.300.10:FF:000001">
    <property type="entry name" value="Adenylosuccinate synthetase"/>
    <property type="match status" value="1"/>
</dbReference>
<dbReference type="FunFam" id="3.90.170.10:FF:000001">
    <property type="entry name" value="Adenylosuccinate synthetase"/>
    <property type="match status" value="1"/>
</dbReference>
<dbReference type="Gene3D" id="3.40.440.10">
    <property type="entry name" value="Adenylosuccinate Synthetase, subunit A, domain 1"/>
    <property type="match status" value="1"/>
</dbReference>
<dbReference type="Gene3D" id="1.10.300.10">
    <property type="entry name" value="Adenylosuccinate Synthetase, subunit A, domain 2"/>
    <property type="match status" value="1"/>
</dbReference>
<dbReference type="Gene3D" id="3.90.170.10">
    <property type="entry name" value="Adenylosuccinate Synthetase, subunit A, domain 3"/>
    <property type="match status" value="1"/>
</dbReference>
<dbReference type="HAMAP" id="MF_00011">
    <property type="entry name" value="Adenylosucc_synth"/>
    <property type="match status" value="1"/>
</dbReference>
<dbReference type="InterPro" id="IPR018220">
    <property type="entry name" value="Adenylosuccin_syn_GTP-bd"/>
</dbReference>
<dbReference type="InterPro" id="IPR033128">
    <property type="entry name" value="Adenylosuccin_syn_Lys_AS"/>
</dbReference>
<dbReference type="InterPro" id="IPR042109">
    <property type="entry name" value="Adenylosuccinate_synth_dom1"/>
</dbReference>
<dbReference type="InterPro" id="IPR042110">
    <property type="entry name" value="Adenylosuccinate_synth_dom2"/>
</dbReference>
<dbReference type="InterPro" id="IPR042111">
    <property type="entry name" value="Adenylosuccinate_synth_dom3"/>
</dbReference>
<dbReference type="InterPro" id="IPR001114">
    <property type="entry name" value="Adenylosuccinate_synthetase"/>
</dbReference>
<dbReference type="InterPro" id="IPR027417">
    <property type="entry name" value="P-loop_NTPase"/>
</dbReference>
<dbReference type="NCBIfam" id="NF002223">
    <property type="entry name" value="PRK01117.1"/>
    <property type="match status" value="1"/>
</dbReference>
<dbReference type="NCBIfam" id="TIGR00184">
    <property type="entry name" value="purA"/>
    <property type="match status" value="1"/>
</dbReference>
<dbReference type="PANTHER" id="PTHR11846">
    <property type="entry name" value="ADENYLOSUCCINATE SYNTHETASE"/>
    <property type="match status" value="1"/>
</dbReference>
<dbReference type="PANTHER" id="PTHR11846:SF0">
    <property type="entry name" value="ADENYLOSUCCINATE SYNTHETASE"/>
    <property type="match status" value="1"/>
</dbReference>
<dbReference type="Pfam" id="PF00709">
    <property type="entry name" value="Adenylsucc_synt"/>
    <property type="match status" value="1"/>
</dbReference>
<dbReference type="SMART" id="SM00788">
    <property type="entry name" value="Adenylsucc_synt"/>
    <property type="match status" value="1"/>
</dbReference>
<dbReference type="SUPFAM" id="SSF52540">
    <property type="entry name" value="P-loop containing nucleoside triphosphate hydrolases"/>
    <property type="match status" value="1"/>
</dbReference>
<dbReference type="PROSITE" id="PS01266">
    <property type="entry name" value="ADENYLOSUCCIN_SYN_1"/>
    <property type="match status" value="1"/>
</dbReference>
<dbReference type="PROSITE" id="PS00513">
    <property type="entry name" value="ADENYLOSUCCIN_SYN_2"/>
    <property type="match status" value="1"/>
</dbReference>
<proteinExistence type="inferred from homology"/>
<evidence type="ECO:0000255" key="1">
    <source>
        <dbReference type="HAMAP-Rule" id="MF_00011"/>
    </source>
</evidence>
<organism>
    <name type="scientific">Lactobacillus delbrueckii subsp. bulgaricus (strain ATCC 11842 / DSM 20081 / BCRC 10696 / JCM 1002 / NBRC 13953 / NCIMB 11778 / NCTC 12712 / WDCM 00102 / Lb 14)</name>
    <dbReference type="NCBI Taxonomy" id="390333"/>
    <lineage>
        <taxon>Bacteria</taxon>
        <taxon>Bacillati</taxon>
        <taxon>Bacillota</taxon>
        <taxon>Bacilli</taxon>
        <taxon>Lactobacillales</taxon>
        <taxon>Lactobacillaceae</taxon>
        <taxon>Lactobacillus</taxon>
    </lineage>
</organism>
<comment type="function">
    <text evidence="1">Plays an important role in the de novo pathway of purine nucleotide biosynthesis. Catalyzes the first committed step in the biosynthesis of AMP from IMP.</text>
</comment>
<comment type="catalytic activity">
    <reaction evidence="1">
        <text>IMP + L-aspartate + GTP = N(6)-(1,2-dicarboxyethyl)-AMP + GDP + phosphate + 2 H(+)</text>
        <dbReference type="Rhea" id="RHEA:15753"/>
        <dbReference type="ChEBI" id="CHEBI:15378"/>
        <dbReference type="ChEBI" id="CHEBI:29991"/>
        <dbReference type="ChEBI" id="CHEBI:37565"/>
        <dbReference type="ChEBI" id="CHEBI:43474"/>
        <dbReference type="ChEBI" id="CHEBI:57567"/>
        <dbReference type="ChEBI" id="CHEBI:58053"/>
        <dbReference type="ChEBI" id="CHEBI:58189"/>
        <dbReference type="EC" id="6.3.4.4"/>
    </reaction>
</comment>
<comment type="cofactor">
    <cofactor evidence="1">
        <name>Mg(2+)</name>
        <dbReference type="ChEBI" id="CHEBI:18420"/>
    </cofactor>
    <text evidence="1">Binds 1 Mg(2+) ion per subunit.</text>
</comment>
<comment type="pathway">
    <text evidence="1">Purine metabolism; AMP biosynthesis via de novo pathway; AMP from IMP: step 1/2.</text>
</comment>
<comment type="subunit">
    <text evidence="1">Homodimer.</text>
</comment>
<comment type="subcellular location">
    <subcellularLocation>
        <location evidence="1">Cytoplasm</location>
    </subcellularLocation>
</comment>
<comment type="similarity">
    <text evidence="1">Belongs to the adenylosuccinate synthetase family.</text>
</comment>
<reference key="1">
    <citation type="journal article" date="2006" name="Proc. Natl. Acad. Sci. U.S.A.">
        <title>The complete genome sequence of Lactobacillus bulgaricus reveals extensive and ongoing reductive evolution.</title>
        <authorList>
            <person name="van de Guchte M."/>
            <person name="Penaud S."/>
            <person name="Grimaldi C."/>
            <person name="Barbe V."/>
            <person name="Bryson K."/>
            <person name="Nicolas P."/>
            <person name="Robert C."/>
            <person name="Oztas S."/>
            <person name="Mangenot S."/>
            <person name="Couloux A."/>
            <person name="Loux V."/>
            <person name="Dervyn R."/>
            <person name="Bossy R."/>
            <person name="Bolotin A."/>
            <person name="Batto J.-M."/>
            <person name="Walunas T."/>
            <person name="Gibrat J.-F."/>
            <person name="Bessieres P."/>
            <person name="Weissenbach J."/>
            <person name="Ehrlich S.D."/>
            <person name="Maguin E."/>
        </authorList>
    </citation>
    <scope>NUCLEOTIDE SEQUENCE [LARGE SCALE GENOMIC DNA]</scope>
    <source>
        <strain>ATCC 11842 / DSM 20081 / BCRC 10696 / JCM 1002 / NBRC 13953 / NCIMB 11778 / NCTC 12712 / WDCM 00102 / Lb 14</strain>
    </source>
</reference>
<name>PURA_LACDA</name>
<accession>Q1GBV4</accession>
<keyword id="KW-0963">Cytoplasm</keyword>
<keyword id="KW-0342">GTP-binding</keyword>
<keyword id="KW-0436">Ligase</keyword>
<keyword id="KW-0460">Magnesium</keyword>
<keyword id="KW-0479">Metal-binding</keyword>
<keyword id="KW-0547">Nucleotide-binding</keyword>
<keyword id="KW-0658">Purine biosynthesis</keyword>
<keyword id="KW-1185">Reference proteome</keyword>
<protein>
    <recommendedName>
        <fullName evidence="1">Adenylosuccinate synthetase</fullName>
        <shortName evidence="1">AMPSase</shortName>
        <shortName evidence="1">AdSS</shortName>
        <ecNumber evidence="1">6.3.4.4</ecNumber>
    </recommendedName>
    <alternativeName>
        <fullName evidence="1">IMP--aspartate ligase</fullName>
    </alternativeName>
</protein>
<sequence>MTSIAVVGSQWGDEGKGKITDFLGTTADLSVRANGGNNAGHTIDFDGKEFKMRLIPSGIFAAKLGAVISNGVVINPKVLLGELNNLEKSGIDTSNLKISNRAHIIMPYHIMQDTYEEEAKGNLKVGTTKNGIGPTYMDKASRIGIRVCDLIDPETFAEKLRFNLERKNALFTKVYGKPAMDFDEIYNEYVEYGKRIAKYVCDTSLYVNDALDRNEKVLFEGAQGIMLDIDQGTYPFVSSSNSVSGGIASGSGIGANRIKTVLGICKAYTTRVGAGPFPTELHDETGDKIRDIAHEYGTVTGRPRRVGWFDSVALRHAKRVAGINALSLNLLDVFSGFDKIKICVAYDLNGKQIDYYPASLKEVEACQPIYEELPAWEEDITGAKSWEDLPEKAQAFVKRISEITGIPVVTVSVGPDREQTIVLQDPWTL</sequence>
<feature type="chain" id="PRO_1000000843" description="Adenylosuccinate synthetase">
    <location>
        <begin position="1"/>
        <end position="429"/>
    </location>
</feature>
<feature type="active site" description="Proton acceptor" evidence="1">
    <location>
        <position position="13"/>
    </location>
</feature>
<feature type="active site" description="Proton donor" evidence="1">
    <location>
        <position position="41"/>
    </location>
</feature>
<feature type="binding site" evidence="1">
    <location>
        <begin position="12"/>
        <end position="18"/>
    </location>
    <ligand>
        <name>GTP</name>
        <dbReference type="ChEBI" id="CHEBI:37565"/>
    </ligand>
</feature>
<feature type="binding site" description="in other chain" evidence="1">
    <location>
        <begin position="13"/>
        <end position="16"/>
    </location>
    <ligand>
        <name>IMP</name>
        <dbReference type="ChEBI" id="CHEBI:58053"/>
        <note>ligand shared between dimeric partners</note>
    </ligand>
</feature>
<feature type="binding site" evidence="1">
    <location>
        <position position="13"/>
    </location>
    <ligand>
        <name>Mg(2+)</name>
        <dbReference type="ChEBI" id="CHEBI:18420"/>
    </ligand>
</feature>
<feature type="binding site" description="in other chain" evidence="1">
    <location>
        <begin position="38"/>
        <end position="41"/>
    </location>
    <ligand>
        <name>IMP</name>
        <dbReference type="ChEBI" id="CHEBI:58053"/>
        <note>ligand shared between dimeric partners</note>
    </ligand>
</feature>
<feature type="binding site" evidence="1">
    <location>
        <begin position="40"/>
        <end position="42"/>
    </location>
    <ligand>
        <name>GTP</name>
        <dbReference type="ChEBI" id="CHEBI:37565"/>
    </ligand>
</feature>
<feature type="binding site" evidence="1">
    <location>
        <position position="40"/>
    </location>
    <ligand>
        <name>Mg(2+)</name>
        <dbReference type="ChEBI" id="CHEBI:18420"/>
    </ligand>
</feature>
<feature type="binding site" description="in other chain" evidence="1">
    <location>
        <position position="128"/>
    </location>
    <ligand>
        <name>IMP</name>
        <dbReference type="ChEBI" id="CHEBI:58053"/>
        <note>ligand shared between dimeric partners</note>
    </ligand>
</feature>
<feature type="binding site" evidence="1">
    <location>
        <position position="142"/>
    </location>
    <ligand>
        <name>IMP</name>
        <dbReference type="ChEBI" id="CHEBI:58053"/>
        <note>ligand shared between dimeric partners</note>
    </ligand>
</feature>
<feature type="binding site" description="in other chain" evidence="1">
    <location>
        <position position="223"/>
    </location>
    <ligand>
        <name>IMP</name>
        <dbReference type="ChEBI" id="CHEBI:58053"/>
        <note>ligand shared between dimeric partners</note>
    </ligand>
</feature>
<feature type="binding site" evidence="1">
    <location>
        <begin position="298"/>
        <end position="304"/>
    </location>
    <ligand>
        <name>substrate</name>
    </ligand>
</feature>
<feature type="binding site" description="in other chain" evidence="1">
    <location>
        <position position="302"/>
    </location>
    <ligand>
        <name>IMP</name>
        <dbReference type="ChEBI" id="CHEBI:58053"/>
        <note>ligand shared between dimeric partners</note>
    </ligand>
</feature>
<feature type="binding site" evidence="1">
    <location>
        <position position="304"/>
    </location>
    <ligand>
        <name>GTP</name>
        <dbReference type="ChEBI" id="CHEBI:37565"/>
    </ligand>
</feature>
<feature type="binding site" evidence="1">
    <location>
        <begin position="330"/>
        <end position="332"/>
    </location>
    <ligand>
        <name>GTP</name>
        <dbReference type="ChEBI" id="CHEBI:37565"/>
    </ligand>
</feature>
<feature type="binding site" evidence="1">
    <location>
        <begin position="412"/>
        <end position="414"/>
    </location>
    <ligand>
        <name>GTP</name>
        <dbReference type="ChEBI" id="CHEBI:37565"/>
    </ligand>
</feature>
<gene>
    <name evidence="1" type="primary">purA</name>
    <name type="ordered locus">Ldb0291</name>
</gene>